<reference key="1">
    <citation type="journal article" date="1995" name="Science">
        <title>Whole-genome random sequencing and assembly of Haemophilus influenzae Rd.</title>
        <authorList>
            <person name="Fleischmann R.D."/>
            <person name="Adams M.D."/>
            <person name="White O."/>
            <person name="Clayton R.A."/>
            <person name="Kirkness E.F."/>
            <person name="Kerlavage A.R."/>
            <person name="Bult C.J."/>
            <person name="Tomb J.-F."/>
            <person name="Dougherty B.A."/>
            <person name="Merrick J.M."/>
            <person name="McKenney K."/>
            <person name="Sutton G.G."/>
            <person name="FitzHugh W."/>
            <person name="Fields C.A."/>
            <person name="Gocayne J.D."/>
            <person name="Scott J.D."/>
            <person name="Shirley R."/>
            <person name="Liu L.-I."/>
            <person name="Glodek A."/>
            <person name="Kelley J.M."/>
            <person name="Weidman J.F."/>
            <person name="Phillips C.A."/>
            <person name="Spriggs T."/>
            <person name="Hedblom E."/>
            <person name="Cotton M.D."/>
            <person name="Utterback T.R."/>
            <person name="Hanna M.C."/>
            <person name="Nguyen D.T."/>
            <person name="Saudek D.M."/>
            <person name="Brandon R.C."/>
            <person name="Fine L.D."/>
            <person name="Fritchman J.L."/>
            <person name="Fuhrmann J.L."/>
            <person name="Geoghagen N.S.M."/>
            <person name="Gnehm C.L."/>
            <person name="McDonald L.A."/>
            <person name="Small K.V."/>
            <person name="Fraser C.M."/>
            <person name="Smith H.O."/>
            <person name="Venter J.C."/>
        </authorList>
    </citation>
    <scope>NUCLEOTIDE SEQUENCE [LARGE SCALE GENOMIC DNA]</scope>
    <source>
        <strain>ATCC 51907 / DSM 11121 / KW20 / Rd</strain>
    </source>
</reference>
<dbReference type="EC" id="2.3.1.30"/>
<dbReference type="EMBL" id="L42023">
    <property type="protein sequence ID" value="AAC22265.1"/>
    <property type="molecule type" value="Genomic_DNA"/>
</dbReference>
<dbReference type="PIR" id="G64080">
    <property type="entry name" value="G64080"/>
</dbReference>
<dbReference type="RefSeq" id="NP_438764.1">
    <property type="nucleotide sequence ID" value="NC_000907.1"/>
</dbReference>
<dbReference type="PDB" id="1S80">
    <property type="method" value="X-ray"/>
    <property type="resolution" value="2.70 A"/>
    <property type="chains" value="A/B/C/D/E/F=2-266"/>
</dbReference>
<dbReference type="PDB" id="1SSM">
    <property type="method" value="X-ray"/>
    <property type="resolution" value="2.15 A"/>
    <property type="chains" value="A/B/C/D/E/F=1-242"/>
</dbReference>
<dbReference type="PDB" id="1SSQ">
    <property type="method" value="X-ray"/>
    <property type="resolution" value="1.85 A"/>
    <property type="chains" value="A/D=1-267"/>
</dbReference>
<dbReference type="PDB" id="1SST">
    <property type="method" value="X-ray"/>
    <property type="resolution" value="2.00 A"/>
    <property type="chains" value="A/B/C=1-267"/>
</dbReference>
<dbReference type="PDB" id="1Y7L">
    <property type="method" value="X-ray"/>
    <property type="resolution" value="1.55 A"/>
    <property type="chains" value="P=258-267"/>
</dbReference>
<dbReference type="PDB" id="7YOH">
    <property type="method" value="X-ray"/>
    <property type="resolution" value="2.50 A"/>
    <property type="chains" value="P=261-267"/>
</dbReference>
<dbReference type="PDB" id="7YOL">
    <property type="method" value="X-ray"/>
    <property type="resolution" value="2.40 A"/>
    <property type="chains" value="B=261-267"/>
</dbReference>
<dbReference type="PDBsum" id="1S80"/>
<dbReference type="PDBsum" id="1SSM"/>
<dbReference type="PDBsum" id="1SSQ"/>
<dbReference type="PDBsum" id="1SST"/>
<dbReference type="PDBsum" id="1Y7L"/>
<dbReference type="PDBsum" id="7YOH"/>
<dbReference type="PDBsum" id="7YOL"/>
<dbReference type="SMR" id="P43886"/>
<dbReference type="STRING" id="71421.HI_0606"/>
<dbReference type="DrugBank" id="DB01992">
    <property type="generic name" value="Coenzyme A"/>
</dbReference>
<dbReference type="DNASU" id="949654"/>
<dbReference type="EnsemblBacteria" id="AAC22265">
    <property type="protein sequence ID" value="AAC22265"/>
    <property type="gene ID" value="HI_0606"/>
</dbReference>
<dbReference type="KEGG" id="hin:HI_0606"/>
<dbReference type="PATRIC" id="fig|71421.8.peg.630"/>
<dbReference type="eggNOG" id="COG1045">
    <property type="taxonomic scope" value="Bacteria"/>
</dbReference>
<dbReference type="HOGENOM" id="CLU_051638_0_1_6"/>
<dbReference type="OrthoDB" id="9801456at2"/>
<dbReference type="PhylomeDB" id="P43886"/>
<dbReference type="BioCyc" id="HINF71421:G1GJ1-625-MONOMER"/>
<dbReference type="BRENDA" id="2.3.1.30">
    <property type="organism ID" value="2529"/>
</dbReference>
<dbReference type="SABIO-RK" id="P43886"/>
<dbReference type="UniPathway" id="UPA00136">
    <property type="reaction ID" value="UER00199"/>
</dbReference>
<dbReference type="EvolutionaryTrace" id="P43886"/>
<dbReference type="Proteomes" id="UP000000579">
    <property type="component" value="Chromosome"/>
</dbReference>
<dbReference type="GO" id="GO:0005829">
    <property type="term" value="C:cytosol"/>
    <property type="evidence" value="ECO:0000318"/>
    <property type="project" value="GO_Central"/>
</dbReference>
<dbReference type="GO" id="GO:0009001">
    <property type="term" value="F:serine O-acetyltransferase activity"/>
    <property type="evidence" value="ECO:0000318"/>
    <property type="project" value="GO_Central"/>
</dbReference>
<dbReference type="GO" id="GO:0006535">
    <property type="term" value="P:cysteine biosynthetic process from serine"/>
    <property type="evidence" value="ECO:0007669"/>
    <property type="project" value="InterPro"/>
</dbReference>
<dbReference type="CDD" id="cd03354">
    <property type="entry name" value="LbH_SAT"/>
    <property type="match status" value="1"/>
</dbReference>
<dbReference type="FunFam" id="1.10.3130.10:FF:000001">
    <property type="entry name" value="Acetyltransferase"/>
    <property type="match status" value="1"/>
</dbReference>
<dbReference type="FunFam" id="2.160.10.10:FF:000002">
    <property type="entry name" value="Serine acetyltransferase"/>
    <property type="match status" value="1"/>
</dbReference>
<dbReference type="Gene3D" id="2.160.10.10">
    <property type="entry name" value="Hexapeptide repeat proteins"/>
    <property type="match status" value="1"/>
</dbReference>
<dbReference type="Gene3D" id="1.10.3130.10">
    <property type="entry name" value="serine acetyltransferase, domain 1"/>
    <property type="match status" value="1"/>
</dbReference>
<dbReference type="InterPro" id="IPR001451">
    <property type="entry name" value="Hexapep"/>
</dbReference>
<dbReference type="InterPro" id="IPR018357">
    <property type="entry name" value="Hexapep_transf_CS"/>
</dbReference>
<dbReference type="InterPro" id="IPR045304">
    <property type="entry name" value="LbH_SAT"/>
</dbReference>
<dbReference type="InterPro" id="IPR010493">
    <property type="entry name" value="Ser_AcTrfase_N"/>
</dbReference>
<dbReference type="InterPro" id="IPR042122">
    <property type="entry name" value="Ser_AcTrfase_N_sf"/>
</dbReference>
<dbReference type="InterPro" id="IPR005881">
    <property type="entry name" value="Ser_O-AcTrfase"/>
</dbReference>
<dbReference type="InterPro" id="IPR053376">
    <property type="entry name" value="Serine_acetyltransferase"/>
</dbReference>
<dbReference type="InterPro" id="IPR011004">
    <property type="entry name" value="Trimer_LpxA-like_sf"/>
</dbReference>
<dbReference type="NCBIfam" id="TIGR01172">
    <property type="entry name" value="cysE"/>
    <property type="match status" value="1"/>
</dbReference>
<dbReference type="NCBIfam" id="NF041874">
    <property type="entry name" value="EPS_EpsC"/>
    <property type="match status" value="1"/>
</dbReference>
<dbReference type="NCBIfam" id="NF008349">
    <property type="entry name" value="PRK11132.1"/>
    <property type="match status" value="1"/>
</dbReference>
<dbReference type="PANTHER" id="PTHR42811">
    <property type="entry name" value="SERINE ACETYLTRANSFERASE"/>
    <property type="match status" value="1"/>
</dbReference>
<dbReference type="Pfam" id="PF00132">
    <property type="entry name" value="Hexapep"/>
    <property type="match status" value="1"/>
</dbReference>
<dbReference type="Pfam" id="PF06426">
    <property type="entry name" value="SATase_N"/>
    <property type="match status" value="1"/>
</dbReference>
<dbReference type="PIRSF" id="PIRSF000441">
    <property type="entry name" value="CysE"/>
    <property type="match status" value="1"/>
</dbReference>
<dbReference type="SMART" id="SM00971">
    <property type="entry name" value="SATase_N"/>
    <property type="match status" value="1"/>
</dbReference>
<dbReference type="SUPFAM" id="SSF51161">
    <property type="entry name" value="Trimeric LpxA-like enzymes"/>
    <property type="match status" value="1"/>
</dbReference>
<dbReference type="PROSITE" id="PS00101">
    <property type="entry name" value="HEXAPEP_TRANSFERASES"/>
    <property type="match status" value="1"/>
</dbReference>
<keyword id="KW-0002">3D-structure</keyword>
<keyword id="KW-0012">Acyltransferase</keyword>
<keyword id="KW-0028">Amino-acid biosynthesis</keyword>
<keyword id="KW-0198">Cysteine biosynthesis</keyword>
<keyword id="KW-0963">Cytoplasm</keyword>
<keyword id="KW-1185">Reference proteome</keyword>
<keyword id="KW-0677">Repeat</keyword>
<keyword id="KW-0808">Transferase</keyword>
<proteinExistence type="evidence at protein level"/>
<comment type="catalytic activity">
    <reaction>
        <text>L-serine + acetyl-CoA = O-acetyl-L-serine + CoA</text>
        <dbReference type="Rhea" id="RHEA:24560"/>
        <dbReference type="ChEBI" id="CHEBI:33384"/>
        <dbReference type="ChEBI" id="CHEBI:57287"/>
        <dbReference type="ChEBI" id="CHEBI:57288"/>
        <dbReference type="ChEBI" id="CHEBI:58340"/>
        <dbReference type="EC" id="2.3.1.30"/>
    </reaction>
</comment>
<comment type="pathway">
    <text>Amino-acid biosynthesis; L-cysteine biosynthesis; L-cysteine from L-serine: step 1/2.</text>
</comment>
<comment type="subcellular location">
    <subcellularLocation>
        <location evidence="1">Cytoplasm</location>
    </subcellularLocation>
</comment>
<comment type="similarity">
    <text evidence="2">Belongs to the transferase hexapeptide repeat family.</text>
</comment>
<gene>
    <name type="primary">cysE</name>
    <name type="ordered locus">HI_0606</name>
</gene>
<evidence type="ECO:0000250" key="1"/>
<evidence type="ECO:0000305" key="2"/>
<evidence type="ECO:0007829" key="3">
    <source>
        <dbReference type="PDB" id="1SSM"/>
    </source>
</evidence>
<evidence type="ECO:0007829" key="4">
    <source>
        <dbReference type="PDB" id="1SSQ"/>
    </source>
</evidence>
<evidence type="ECO:0007829" key="5">
    <source>
        <dbReference type="PDB" id="1SST"/>
    </source>
</evidence>
<feature type="chain" id="PRO_0000068674" description="Serine acetyltransferase">
    <location>
        <begin position="1"/>
        <end position="267"/>
    </location>
</feature>
<feature type="helix" evidence="4">
    <location>
        <begin position="3"/>
        <end position="19"/>
    </location>
</feature>
<feature type="helix" evidence="4">
    <location>
        <begin position="21"/>
        <end position="30"/>
    </location>
</feature>
<feature type="turn" evidence="4">
    <location>
        <begin position="31"/>
        <end position="33"/>
    </location>
</feature>
<feature type="strand" evidence="4">
    <location>
        <begin position="34"/>
        <end position="36"/>
    </location>
</feature>
<feature type="helix" evidence="4">
    <location>
        <begin position="37"/>
        <end position="49"/>
    </location>
</feature>
<feature type="strand" evidence="5">
    <location>
        <begin position="52"/>
        <end position="54"/>
    </location>
</feature>
<feature type="helix" evidence="4">
    <location>
        <begin position="56"/>
        <end position="69"/>
    </location>
</feature>
<feature type="helix" evidence="4">
    <location>
        <begin position="72"/>
        <end position="87"/>
    </location>
</feature>
<feature type="helix" evidence="4">
    <location>
        <begin position="95"/>
        <end position="100"/>
    </location>
</feature>
<feature type="helix" evidence="4">
    <location>
        <begin position="102"/>
        <end position="117"/>
    </location>
</feature>
<feature type="turn" evidence="4">
    <location>
        <begin position="118"/>
        <end position="120"/>
    </location>
</feature>
<feature type="helix" evidence="4">
    <location>
        <begin position="122"/>
        <end position="136"/>
    </location>
</feature>
<feature type="strand" evidence="5">
    <location>
        <begin position="137"/>
        <end position="140"/>
    </location>
</feature>
<feature type="strand" evidence="4">
    <location>
        <begin position="151"/>
        <end position="154"/>
    </location>
</feature>
<feature type="strand" evidence="5">
    <location>
        <begin position="158"/>
        <end position="160"/>
    </location>
</feature>
<feature type="strand" evidence="5">
    <location>
        <begin position="171"/>
        <end position="173"/>
    </location>
</feature>
<feature type="strand" evidence="4">
    <location>
        <begin position="177"/>
        <end position="179"/>
    </location>
</feature>
<feature type="strand" evidence="4">
    <location>
        <begin position="182"/>
        <end position="184"/>
    </location>
</feature>
<feature type="strand" evidence="3">
    <location>
        <begin position="185"/>
        <end position="187"/>
    </location>
</feature>
<feature type="strand" evidence="4">
    <location>
        <begin position="203"/>
        <end position="207"/>
    </location>
</feature>
<feature type="strand" evidence="4">
    <location>
        <begin position="231"/>
        <end position="233"/>
    </location>
</feature>
<feature type="turn" evidence="4">
    <location>
        <begin position="234"/>
        <end position="237"/>
    </location>
</feature>
<feature type="strand" evidence="5">
    <location>
        <begin position="238"/>
        <end position="240"/>
    </location>
</feature>
<feature type="helix" evidence="4">
    <location>
        <begin position="248"/>
        <end position="251"/>
    </location>
</feature>
<sequence length="267" mass="29166">MTLDVWQHIRQEAKELAENEPMLASFFHSTILKHQNLGGALSYLLANKLANPIMPAISLREIIEEAYQSNPSIIDCAACDIQAVRHRDPAVELWSTPLLYLKGFHAIQSYRITHYLWNQNRKSLALYLQNQISVAFDVDIHPAAKIGHGIMFDHATGIVVGETSVIENDVSILQGVTLGGTGKESGDRHPKVREGVMIGAGAKILGNIEVGKYAKIGANSVVLNPVPEYATAAGVPARIVSQDKAAKPAFDMNQYFIGIDDGMNLNI</sequence>
<organism>
    <name type="scientific">Haemophilus influenzae (strain ATCC 51907 / DSM 11121 / KW20 / Rd)</name>
    <dbReference type="NCBI Taxonomy" id="71421"/>
    <lineage>
        <taxon>Bacteria</taxon>
        <taxon>Pseudomonadati</taxon>
        <taxon>Pseudomonadota</taxon>
        <taxon>Gammaproteobacteria</taxon>
        <taxon>Pasteurellales</taxon>
        <taxon>Pasteurellaceae</taxon>
        <taxon>Haemophilus</taxon>
    </lineage>
</organism>
<name>CYSE_HAEIN</name>
<accession>P43886</accession>
<protein>
    <recommendedName>
        <fullName>Serine acetyltransferase</fullName>
        <shortName>SAT</shortName>
        <ecNumber>2.3.1.30</ecNumber>
    </recommendedName>
</protein>